<name>THO2_SCHPO</name>
<feature type="chain" id="PRO_0000116472" description="THO complex subunit 2">
    <location>
        <begin position="1"/>
        <end position="1628"/>
    </location>
</feature>
<feature type="region of interest" description="Disordered" evidence="2">
    <location>
        <begin position="1"/>
        <end position="21"/>
    </location>
</feature>
<feature type="region of interest" description="Disordered" evidence="2">
    <location>
        <begin position="1337"/>
        <end position="1628"/>
    </location>
</feature>
<feature type="compositionally biased region" description="Basic and acidic residues" evidence="2">
    <location>
        <begin position="1"/>
        <end position="10"/>
    </location>
</feature>
<feature type="compositionally biased region" description="Basic and acidic residues" evidence="2">
    <location>
        <begin position="1360"/>
        <end position="1399"/>
    </location>
</feature>
<feature type="compositionally biased region" description="Basic and acidic residues" evidence="2">
    <location>
        <begin position="1411"/>
        <end position="1429"/>
    </location>
</feature>
<feature type="compositionally biased region" description="Polar residues" evidence="2">
    <location>
        <begin position="1430"/>
        <end position="1444"/>
    </location>
</feature>
<feature type="compositionally biased region" description="Basic and acidic residues" evidence="2">
    <location>
        <begin position="1461"/>
        <end position="1474"/>
    </location>
</feature>
<feature type="compositionally biased region" description="Low complexity" evidence="2">
    <location>
        <begin position="1476"/>
        <end position="1493"/>
    </location>
</feature>
<feature type="compositionally biased region" description="Basic and acidic residues" evidence="2">
    <location>
        <begin position="1494"/>
        <end position="1526"/>
    </location>
</feature>
<feature type="compositionally biased region" description="Polar residues" evidence="2">
    <location>
        <begin position="1527"/>
        <end position="1550"/>
    </location>
</feature>
<feature type="compositionally biased region" description="Basic and acidic residues" evidence="2">
    <location>
        <begin position="1551"/>
        <end position="1560"/>
    </location>
</feature>
<feature type="compositionally biased region" description="Basic and acidic residues" evidence="2">
    <location>
        <begin position="1581"/>
        <end position="1628"/>
    </location>
</feature>
<feature type="modified residue" description="Phosphothreonine" evidence="4">
    <location>
        <position position="1406"/>
    </location>
</feature>
<feature type="modified residue" description="Phosphothreonine" evidence="4">
    <location>
        <position position="1408"/>
    </location>
</feature>
<feature type="modified residue" description="Phosphoserine" evidence="4">
    <location>
        <position position="1577"/>
    </location>
</feature>
<comment type="function">
    <text>Component the THO subcomplex of the TREX complex, which operates in coupling transcription elongation to mRNA export. The THO complex is recruited to transcribed genes and moves along the gene with the elongating polymerase during transcription. THO is important for stabilizing nascent RNA in the RNA polymerase II elongation complex by preventing formation of DNA:RNA hybrids behind the elongating polymerase.</text>
</comment>
<comment type="subunit">
    <text evidence="1">Component of the THO complex. THO associates with DNA and RNA in vitro (By similarity).</text>
</comment>
<comment type="subcellular location">
    <subcellularLocation>
        <location evidence="3">Nucleus</location>
    </subcellularLocation>
</comment>
<comment type="similarity">
    <text evidence="5">Belongs to the THOC2 family.</text>
</comment>
<organism>
    <name type="scientific">Schizosaccharomyces pombe (strain 972 / ATCC 24843)</name>
    <name type="common">Fission yeast</name>
    <dbReference type="NCBI Taxonomy" id="284812"/>
    <lineage>
        <taxon>Eukaryota</taxon>
        <taxon>Fungi</taxon>
        <taxon>Dikarya</taxon>
        <taxon>Ascomycota</taxon>
        <taxon>Taphrinomycotina</taxon>
        <taxon>Schizosaccharomycetes</taxon>
        <taxon>Schizosaccharomycetales</taxon>
        <taxon>Schizosaccharomycetaceae</taxon>
        <taxon>Schizosaccharomyces</taxon>
    </lineage>
</organism>
<dbReference type="EMBL" id="CU329670">
    <property type="protein sequence ID" value="CAA93223.2"/>
    <property type="molecule type" value="Genomic_DNA"/>
</dbReference>
<dbReference type="PIR" id="T38055">
    <property type="entry name" value="T38055"/>
</dbReference>
<dbReference type="RefSeq" id="XP_001713043.1">
    <property type="nucleotide sequence ID" value="XM_001712991.2"/>
</dbReference>
<dbReference type="SMR" id="Q09779"/>
<dbReference type="BioGRID" id="280530">
    <property type="interactions" value="9"/>
</dbReference>
<dbReference type="FunCoup" id="Q09779">
    <property type="interactions" value="815"/>
</dbReference>
<dbReference type="STRING" id="284812.Q09779"/>
<dbReference type="iPTMnet" id="Q09779"/>
<dbReference type="PaxDb" id="4896-SPAC1D4.14.1"/>
<dbReference type="EnsemblFungi" id="SPAC1D4.14.1">
    <property type="protein sequence ID" value="SPAC1D4.14.1:pep"/>
    <property type="gene ID" value="SPAC1D4.14"/>
</dbReference>
<dbReference type="PomBase" id="SPAC1D4.14">
    <property type="gene designation" value="tho2"/>
</dbReference>
<dbReference type="VEuPathDB" id="FungiDB:SPAC1D4.14"/>
<dbReference type="eggNOG" id="KOG1874">
    <property type="taxonomic scope" value="Eukaryota"/>
</dbReference>
<dbReference type="HOGENOM" id="CLU_000511_1_1_1"/>
<dbReference type="InParanoid" id="Q09779"/>
<dbReference type="OMA" id="QERWTCI"/>
<dbReference type="PhylomeDB" id="Q09779"/>
<dbReference type="PRO" id="PR:Q09779"/>
<dbReference type="Proteomes" id="UP000002485">
    <property type="component" value="Chromosome I"/>
</dbReference>
<dbReference type="GO" id="GO:0005634">
    <property type="term" value="C:nucleus"/>
    <property type="evidence" value="ECO:0007005"/>
    <property type="project" value="PomBase"/>
</dbReference>
<dbReference type="GO" id="GO:0000445">
    <property type="term" value="C:THO complex part of transcription export complex"/>
    <property type="evidence" value="ECO:0000318"/>
    <property type="project" value="GO_Central"/>
</dbReference>
<dbReference type="GO" id="GO:0003677">
    <property type="term" value="F:DNA binding"/>
    <property type="evidence" value="ECO:0000266"/>
    <property type="project" value="PomBase"/>
</dbReference>
<dbReference type="GO" id="GO:0003729">
    <property type="term" value="F:mRNA binding"/>
    <property type="evidence" value="ECO:0000318"/>
    <property type="project" value="GO_Central"/>
</dbReference>
<dbReference type="GO" id="GO:0006406">
    <property type="term" value="P:mRNA export from nucleus"/>
    <property type="evidence" value="ECO:0000318"/>
    <property type="project" value="GO_Central"/>
</dbReference>
<dbReference type="GO" id="GO:0006397">
    <property type="term" value="P:mRNA processing"/>
    <property type="evidence" value="ECO:0007669"/>
    <property type="project" value="InterPro"/>
</dbReference>
<dbReference type="GO" id="GO:0016973">
    <property type="term" value="P:poly(A)+ mRNA export from nucleus"/>
    <property type="evidence" value="ECO:0000305"/>
    <property type="project" value="PomBase"/>
</dbReference>
<dbReference type="InterPro" id="IPR009818">
    <property type="entry name" value="PAM2_motif"/>
</dbReference>
<dbReference type="InterPro" id="IPR040007">
    <property type="entry name" value="Tho2"/>
</dbReference>
<dbReference type="InterPro" id="IPR021418">
    <property type="entry name" value="THO_THOC2_C"/>
</dbReference>
<dbReference type="InterPro" id="IPR021726">
    <property type="entry name" value="THO_THOC2_N"/>
</dbReference>
<dbReference type="InterPro" id="IPR032302">
    <property type="entry name" value="THOC2_N"/>
</dbReference>
<dbReference type="PANTHER" id="PTHR21597:SF0">
    <property type="entry name" value="THO COMPLEX SUBUNIT 2"/>
    <property type="match status" value="1"/>
</dbReference>
<dbReference type="PANTHER" id="PTHR21597">
    <property type="entry name" value="THO2 PROTEIN"/>
    <property type="match status" value="1"/>
</dbReference>
<dbReference type="Pfam" id="PF07145">
    <property type="entry name" value="PAM2"/>
    <property type="match status" value="1"/>
</dbReference>
<dbReference type="Pfam" id="PF11262">
    <property type="entry name" value="Tho2"/>
    <property type="match status" value="1"/>
</dbReference>
<dbReference type="Pfam" id="PF11732">
    <property type="entry name" value="Thoc2"/>
    <property type="match status" value="1"/>
</dbReference>
<dbReference type="Pfam" id="PF16134">
    <property type="entry name" value="THOC2_N"/>
    <property type="match status" value="1"/>
</dbReference>
<keyword id="KW-0539">Nucleus</keyword>
<keyword id="KW-0597">Phosphoprotein</keyword>
<keyword id="KW-1185">Reference proteome</keyword>
<keyword id="KW-0804">Transcription</keyword>
<keyword id="KW-0805">Transcription regulation</keyword>
<gene>
    <name type="primary">tho2</name>
    <name type="ORF">SPAC1D4.14</name>
    <name type="ORF">SPAC22F3.14c</name>
</gene>
<proteinExistence type="evidence at protein level"/>
<accession>Q09779</accession>
<accession>O13884</accession>
<evidence type="ECO:0000250" key="1"/>
<evidence type="ECO:0000256" key="2">
    <source>
        <dbReference type="SAM" id="MobiDB-lite"/>
    </source>
</evidence>
<evidence type="ECO:0000269" key="3">
    <source>
    </source>
</evidence>
<evidence type="ECO:0000269" key="4">
    <source>
    </source>
</evidence>
<evidence type="ECO:0000305" key="5"/>
<sequence>MTSLPEKDQQGEVSVSENQKKLSEEWEPYIDKLVASNRTRDERVESIQELFQKCVIEEKLPVDIFFSIFSLAFERLEEKNTLASYVIDTLWLFDTEWIKNFHEGSHDKAEKRLVSIGKGLKEFLPEEWLLSRLDCKFLENINVVPNGDFLNRKIVRTNTSLLYRQKKFNLLREESEGFSHLMINFFDALTCLRNKSLNEDYLIVQVNKSIISTIGAFDLDPNKVLDLILLLFSENLLDSWRFFLSILRNSPWGPNKERKFWNQLPDREKETFLNNLSNANGIFNFDERFTNTKSIMSQVLGHNLQYMYKEDDENLESYFMMVALLIKYNFISIDNIWAHLSPSDEELGKELGKYKDKLDEQTFKAKGNALTMAAPLPDDEIEDGETMDGQKAEAVPEIKKAKPSQKLGLLKSLLSIGDLSSSLLILGRYPFLLRAYPELSNLYHKLLHISISSIYANYSPLKLLPNDVRERLKQPKFIPEDSRLREITLRPPKEKNLVFSLDPFADRFNKTESEVFYYFENYDEDIPILRNLTEFYNIAIPWLRLSGLALCHDPVIVTKLCRIGQKCVDNSSESRTLWLDIIRSLLLPLITLIDVNTGLSYELFELLSKFDSSTRYALYGEWSSTSMKKFPELKLQNSITEKETKGILRRLTKTNVKQFGRLLAKVCHSNPCTVFSIALNQIETYDNLVEVVVDSARFITALDFDALTFIILSSFSNEFKKRLKSDGTSIAHWLQGLASFCGRVFRRYSSLDCTSIVEYVIKQFKVNQMFDLVILKELLSQMTGLQPWTNLSDNQIQGAAGGPVLRQLSLSLIYENPDVVRKSSMRLFNTLQKNGLATQLLVLLSQKYSTCIYDVTDENSHLKLISSLQDECSDVLYLLMEFLNMVCSPKSYYKLIPSFEQLIQDFHIQPQVAFYLSRYKNLDHSLTGSNTEDAMDIDYENTSSPNTASNPVWSIDNSVITELLPKQIWDYFSPNFYLTFWKLSLYDVFVPLERYEFERSRAFDQIRQTDAANTFYSRHRHDRQKIMQLSNSLQNELKEHINSLESVRKVLQGDCVKWFIPNGVFPNGTRLEHARFNCARYLWTLCIAPRLKMSPHDALYCAKFVKLLHSLGTPNFSTMSFLEILFNSQLPSFIFSMTQREADNFGRFLYEVLYDITSWYRDKILYERECLANGALPGFRLYWSDEQNDPDLSAVLPYNKFVLLFSKWHKYLTSYFESCLLSTEYMHIYNSVIILEKILPCFPLIIESGSALKRAAERLKDEEKREDLKVLALGYFAKLSKKQPEWVSFNSFSGTVRPSNSEKLQRPQQLSVAATSAVDSKTASISEEQAKIDKQKVALNPSAPEFVPDSTPSDAVASETDNKNLVENKAVEKRVEARSSANERKQEERRRKTTPEGNRRALRTRTPTNEDIQRSDSKLREDQSRDRTPQSRSFTNENNDNLRSVSRHTRREPQQAQNLNARREHESQKSDRWRQNGNVNRNPRVSNNNSTNVSRERSSEANHRTSNDNKRDEVTEGKDKNKRQDISGESNSRQNNAISRAGRSNGSNRGNDSRDADGRRSTHYASNKRPRSSDSQSPSNLREEDERENSRRRARQDDRRDRDSRQQRDRPRDRTSRSAREEKRRKIQ</sequence>
<reference key="1">
    <citation type="journal article" date="2002" name="Nature">
        <title>The genome sequence of Schizosaccharomyces pombe.</title>
        <authorList>
            <person name="Wood V."/>
            <person name="Gwilliam R."/>
            <person name="Rajandream M.A."/>
            <person name="Lyne M.H."/>
            <person name="Lyne R."/>
            <person name="Stewart A."/>
            <person name="Sgouros J.G."/>
            <person name="Peat N."/>
            <person name="Hayles J."/>
            <person name="Baker S.G."/>
            <person name="Basham D."/>
            <person name="Bowman S."/>
            <person name="Brooks K."/>
            <person name="Brown D."/>
            <person name="Brown S."/>
            <person name="Chillingworth T."/>
            <person name="Churcher C.M."/>
            <person name="Collins M."/>
            <person name="Connor R."/>
            <person name="Cronin A."/>
            <person name="Davis P."/>
            <person name="Feltwell T."/>
            <person name="Fraser A."/>
            <person name="Gentles S."/>
            <person name="Goble A."/>
            <person name="Hamlin N."/>
            <person name="Harris D.E."/>
            <person name="Hidalgo J."/>
            <person name="Hodgson G."/>
            <person name="Holroyd S."/>
            <person name="Hornsby T."/>
            <person name="Howarth S."/>
            <person name="Huckle E.J."/>
            <person name="Hunt S."/>
            <person name="Jagels K."/>
            <person name="James K.D."/>
            <person name="Jones L."/>
            <person name="Jones M."/>
            <person name="Leather S."/>
            <person name="McDonald S."/>
            <person name="McLean J."/>
            <person name="Mooney P."/>
            <person name="Moule S."/>
            <person name="Mungall K.L."/>
            <person name="Murphy L.D."/>
            <person name="Niblett D."/>
            <person name="Odell C."/>
            <person name="Oliver K."/>
            <person name="O'Neil S."/>
            <person name="Pearson D."/>
            <person name="Quail M.A."/>
            <person name="Rabbinowitsch E."/>
            <person name="Rutherford K.M."/>
            <person name="Rutter S."/>
            <person name="Saunders D."/>
            <person name="Seeger K."/>
            <person name="Sharp S."/>
            <person name="Skelton J."/>
            <person name="Simmonds M.N."/>
            <person name="Squares R."/>
            <person name="Squares S."/>
            <person name="Stevens K."/>
            <person name="Taylor K."/>
            <person name="Taylor R.G."/>
            <person name="Tivey A."/>
            <person name="Walsh S.V."/>
            <person name="Warren T."/>
            <person name="Whitehead S."/>
            <person name="Woodward J.R."/>
            <person name="Volckaert G."/>
            <person name="Aert R."/>
            <person name="Robben J."/>
            <person name="Grymonprez B."/>
            <person name="Weltjens I."/>
            <person name="Vanstreels E."/>
            <person name="Rieger M."/>
            <person name="Schaefer M."/>
            <person name="Mueller-Auer S."/>
            <person name="Gabel C."/>
            <person name="Fuchs M."/>
            <person name="Duesterhoeft A."/>
            <person name="Fritzc C."/>
            <person name="Holzer E."/>
            <person name="Moestl D."/>
            <person name="Hilbert H."/>
            <person name="Borzym K."/>
            <person name="Langer I."/>
            <person name="Beck A."/>
            <person name="Lehrach H."/>
            <person name="Reinhardt R."/>
            <person name="Pohl T.M."/>
            <person name="Eger P."/>
            <person name="Zimmermann W."/>
            <person name="Wedler H."/>
            <person name="Wambutt R."/>
            <person name="Purnelle B."/>
            <person name="Goffeau A."/>
            <person name="Cadieu E."/>
            <person name="Dreano S."/>
            <person name="Gloux S."/>
            <person name="Lelaure V."/>
            <person name="Mottier S."/>
            <person name="Galibert F."/>
            <person name="Aves S.J."/>
            <person name="Xiang Z."/>
            <person name="Hunt C."/>
            <person name="Moore K."/>
            <person name="Hurst S.M."/>
            <person name="Lucas M."/>
            <person name="Rochet M."/>
            <person name="Gaillardin C."/>
            <person name="Tallada V.A."/>
            <person name="Garzon A."/>
            <person name="Thode G."/>
            <person name="Daga R.R."/>
            <person name="Cruzado L."/>
            <person name="Jimenez J."/>
            <person name="Sanchez M."/>
            <person name="del Rey F."/>
            <person name="Benito J."/>
            <person name="Dominguez A."/>
            <person name="Revuelta J.L."/>
            <person name="Moreno S."/>
            <person name="Armstrong J."/>
            <person name="Forsburg S.L."/>
            <person name="Cerutti L."/>
            <person name="Lowe T."/>
            <person name="McCombie W.R."/>
            <person name="Paulsen I."/>
            <person name="Potashkin J."/>
            <person name="Shpakovski G.V."/>
            <person name="Ussery D."/>
            <person name="Barrell B.G."/>
            <person name="Nurse P."/>
        </authorList>
    </citation>
    <scope>NUCLEOTIDE SEQUENCE [LARGE SCALE GENOMIC DNA]</scope>
    <source>
        <strain>972 / ATCC 24843</strain>
    </source>
</reference>
<reference key="2">
    <citation type="journal article" date="2006" name="Nat. Biotechnol.">
        <title>ORFeome cloning and global analysis of protein localization in the fission yeast Schizosaccharomyces pombe.</title>
        <authorList>
            <person name="Matsuyama A."/>
            <person name="Arai R."/>
            <person name="Yashiroda Y."/>
            <person name="Shirai A."/>
            <person name="Kamata A."/>
            <person name="Sekido S."/>
            <person name="Kobayashi Y."/>
            <person name="Hashimoto A."/>
            <person name="Hamamoto M."/>
            <person name="Hiraoka Y."/>
            <person name="Horinouchi S."/>
            <person name="Yoshida M."/>
        </authorList>
    </citation>
    <scope>SUBCELLULAR LOCATION [LARGE SCALE ANALYSIS]</scope>
</reference>
<reference key="3">
    <citation type="journal article" date="2008" name="J. Proteome Res.">
        <title>Phosphoproteome analysis of fission yeast.</title>
        <authorList>
            <person name="Wilson-Grady J.T."/>
            <person name="Villen J."/>
            <person name="Gygi S.P."/>
        </authorList>
    </citation>
    <scope>PHOSPHORYLATION [LARGE SCALE ANALYSIS] AT THR-1406; THR-1408 AND SER-1577</scope>
    <scope>IDENTIFICATION BY MASS SPECTROMETRY</scope>
</reference>
<protein>
    <recommendedName>
        <fullName>THO complex subunit 2</fullName>
    </recommendedName>
</protein>